<keyword id="KW-0025">Alternative splicing</keyword>
<keyword id="KW-0325">Glycoprotein</keyword>
<keyword id="KW-0472">Membrane</keyword>
<keyword id="KW-0488">Methylation</keyword>
<keyword id="KW-1185">Reference proteome</keyword>
<keyword id="KW-0812">Transmembrane</keyword>
<keyword id="KW-1133">Transmembrane helix</keyword>
<gene>
    <name type="primary">Disp2</name>
    <name type="synonym">Kiaa1742</name>
</gene>
<comment type="subcellular location">
    <subcellularLocation>
        <location evidence="5">Membrane</location>
        <topology evidence="5">Multi-pass membrane protein</topology>
    </subcellularLocation>
</comment>
<comment type="alternative products">
    <event type="alternative splicing"/>
    <isoform>
        <id>Q8CIP5-1</id>
        <name>1</name>
        <sequence type="displayed"/>
    </isoform>
    <isoform>
        <id>Q8CIP5-2</id>
        <name>2</name>
        <sequence type="described" ref="VSP_029324 VSP_029325"/>
    </isoform>
</comment>
<comment type="similarity">
    <text evidence="5">Belongs to the dispatched family.</text>
</comment>
<organism>
    <name type="scientific">Mus musculus</name>
    <name type="common">Mouse</name>
    <dbReference type="NCBI Taxonomy" id="10090"/>
    <lineage>
        <taxon>Eukaryota</taxon>
        <taxon>Metazoa</taxon>
        <taxon>Chordata</taxon>
        <taxon>Craniata</taxon>
        <taxon>Vertebrata</taxon>
        <taxon>Euteleostomi</taxon>
        <taxon>Mammalia</taxon>
        <taxon>Eutheria</taxon>
        <taxon>Euarchontoglires</taxon>
        <taxon>Glires</taxon>
        <taxon>Rodentia</taxon>
        <taxon>Myomorpha</taxon>
        <taxon>Muroidea</taxon>
        <taxon>Muridae</taxon>
        <taxon>Murinae</taxon>
        <taxon>Mus</taxon>
        <taxon>Mus</taxon>
    </lineage>
</organism>
<sequence length="1345" mass="147944">MAPEASPERSCSLHTCPLEDPTGAPVPPPTVSTLQAIDPTSPLTAGHFAFPRAPQDYQEGSSLLGLGDQASLCAHVSNLSTSIDTSQHDGVWKQPSVQRHVVSVRQERTFRMPKSYSHMIADWPVAVIVGCLAFIFLCTLAGLLGSPPLDFSEPLLGFEPRDTEIGRRLEVWKAMQALTGPKNLLSLSPDPEMNSSSLLSTLSPAAWGRAEESVVRTKRMVGPVEVKEEENFFCGRPEKSHAKLVFVSTSGGSLWNLQAIHSMCRIEQEQIRSHISFGALCQRSAANECCPSWSLGNYLAVLSNRSSCQDTTQADTDRTLALLRFCATFYHRGVLVPACVGSSQDKPPFCAQVPAKCTGSNVVYEFLHYLLDRDFLSPQTADYQVPSLKFALLFLPIIKTSSLLDIYLDGLGDPIKVSDNYTSISGMDLGLKPRLLKYYLAEDTMYPLIALVVIFFGMSLYLRSLFITFMSLLGVLGSLMVAYFLYHVAFRMAYFPFVNLAALLLLSGVCVNYTLIFLDMWRLSRGQVPSGGMPHRVGRTMHHFGYLLLVSGLTTSAAFYGSYLSRLPAVRCFALFMGTAVLVHMGLTLLWLPATVVLHERYLAHGCVAQAHGQRGGSDPLRLLLALHRRIRIFRKIISILSRLLFQRLLPCGVIKFRYIWICWFAALAAGGAYIGGVSPRLQLPILLPLGGQFFRSSHPFERFDAEYRQQFLFEDLPPNEGGNLPVVLVWGILPVDTSDPLDPRTNSSVVSDPDFSPSSPEAQEWLLALCHGAQNQSFFGDQPEGWPTLCLVEALQQWMESPSCGRLGPDLCCGQSEFPWAPQLYLHCLKMMALEQSPDGTRDLGLRFDTHGNLAALVLKFQTNLPYSTEYGPVHHFYTEISRWLSTEMSKAPPGLNQGWFTSNLELYSLQHSLSTEPAVVLGLALALAFATLLLSTWNVPLSLFSVAAVAGTVLLTVGLLVLLEWQLNTAEALFLSASVGLSVDLTINYCISYHLCPHPDRLSRVAFSLRQISRATAMTTGVLFASGVIMLPSTILLYRKLGIIVMMVKFLGCGFASFFFQSLCCFFGPEKNCGQILWPCAHLPWDAGTEDPDEKGRAGPPGFSEHYELQPLARRRSPSFDTSTATSKLSHRPSILSEDLQIHDGSCCLQHAQAPVSPRDLLLDHQTVFSQCPALQTSSPYKQAGPTPQTWIRQDSQGQKTEPLQALPEGPAHCPKSKVEELPDGLCSSASTLEGLSVSDDTCASEHSVRVPDSVGTSPEVMNGTGHPILERGQLNGKRDTLWLALKETIYDPNMPNSHHSSLSWKGRGGPGDISPVMLPNSQPDLPDVWLRRPSTYTSGYSS</sequence>
<reference key="1">
    <citation type="journal article" date="2002" name="Cell">
        <title>Hedgehog-mediated patterning of the mammalian embryo requires transporter-like function of dispatched.</title>
        <authorList>
            <person name="Ma Y."/>
            <person name="Erkner A."/>
            <person name="Gong R."/>
            <person name="Yao S."/>
            <person name="Taipale J."/>
            <person name="Basler K."/>
            <person name="Beachy P.A."/>
        </authorList>
    </citation>
    <scope>NUCLEOTIDE SEQUENCE [MRNA] (ISOFORM 1)</scope>
    <source>
        <strain>129</strain>
        <tissue>Lung</tissue>
    </source>
</reference>
<reference key="2">
    <citation type="journal article" date="2005" name="Science">
        <title>The transcriptional landscape of the mammalian genome.</title>
        <authorList>
            <person name="Carninci P."/>
            <person name="Kasukawa T."/>
            <person name="Katayama S."/>
            <person name="Gough J."/>
            <person name="Frith M.C."/>
            <person name="Maeda N."/>
            <person name="Oyama R."/>
            <person name="Ravasi T."/>
            <person name="Lenhard B."/>
            <person name="Wells C."/>
            <person name="Kodzius R."/>
            <person name="Shimokawa K."/>
            <person name="Bajic V.B."/>
            <person name="Brenner S.E."/>
            <person name="Batalov S."/>
            <person name="Forrest A.R."/>
            <person name="Zavolan M."/>
            <person name="Davis M.J."/>
            <person name="Wilming L.G."/>
            <person name="Aidinis V."/>
            <person name="Allen J.E."/>
            <person name="Ambesi-Impiombato A."/>
            <person name="Apweiler R."/>
            <person name="Aturaliya R.N."/>
            <person name="Bailey T.L."/>
            <person name="Bansal M."/>
            <person name="Baxter L."/>
            <person name="Beisel K.W."/>
            <person name="Bersano T."/>
            <person name="Bono H."/>
            <person name="Chalk A.M."/>
            <person name="Chiu K.P."/>
            <person name="Choudhary V."/>
            <person name="Christoffels A."/>
            <person name="Clutterbuck D.R."/>
            <person name="Crowe M.L."/>
            <person name="Dalla E."/>
            <person name="Dalrymple B.P."/>
            <person name="de Bono B."/>
            <person name="Della Gatta G."/>
            <person name="di Bernardo D."/>
            <person name="Down T."/>
            <person name="Engstrom P."/>
            <person name="Fagiolini M."/>
            <person name="Faulkner G."/>
            <person name="Fletcher C.F."/>
            <person name="Fukushima T."/>
            <person name="Furuno M."/>
            <person name="Futaki S."/>
            <person name="Gariboldi M."/>
            <person name="Georgii-Hemming P."/>
            <person name="Gingeras T.R."/>
            <person name="Gojobori T."/>
            <person name="Green R.E."/>
            <person name="Gustincich S."/>
            <person name="Harbers M."/>
            <person name="Hayashi Y."/>
            <person name="Hensch T.K."/>
            <person name="Hirokawa N."/>
            <person name="Hill D."/>
            <person name="Huminiecki L."/>
            <person name="Iacono M."/>
            <person name="Ikeo K."/>
            <person name="Iwama A."/>
            <person name="Ishikawa T."/>
            <person name="Jakt M."/>
            <person name="Kanapin A."/>
            <person name="Katoh M."/>
            <person name="Kawasawa Y."/>
            <person name="Kelso J."/>
            <person name="Kitamura H."/>
            <person name="Kitano H."/>
            <person name="Kollias G."/>
            <person name="Krishnan S.P."/>
            <person name="Kruger A."/>
            <person name="Kummerfeld S.K."/>
            <person name="Kurochkin I.V."/>
            <person name="Lareau L.F."/>
            <person name="Lazarevic D."/>
            <person name="Lipovich L."/>
            <person name="Liu J."/>
            <person name="Liuni S."/>
            <person name="McWilliam S."/>
            <person name="Madan Babu M."/>
            <person name="Madera M."/>
            <person name="Marchionni L."/>
            <person name="Matsuda H."/>
            <person name="Matsuzawa S."/>
            <person name="Miki H."/>
            <person name="Mignone F."/>
            <person name="Miyake S."/>
            <person name="Morris K."/>
            <person name="Mottagui-Tabar S."/>
            <person name="Mulder N."/>
            <person name="Nakano N."/>
            <person name="Nakauchi H."/>
            <person name="Ng P."/>
            <person name="Nilsson R."/>
            <person name="Nishiguchi S."/>
            <person name="Nishikawa S."/>
            <person name="Nori F."/>
            <person name="Ohara O."/>
            <person name="Okazaki Y."/>
            <person name="Orlando V."/>
            <person name="Pang K.C."/>
            <person name="Pavan W.J."/>
            <person name="Pavesi G."/>
            <person name="Pesole G."/>
            <person name="Petrovsky N."/>
            <person name="Piazza S."/>
            <person name="Reed J."/>
            <person name="Reid J.F."/>
            <person name="Ring B.Z."/>
            <person name="Ringwald M."/>
            <person name="Rost B."/>
            <person name="Ruan Y."/>
            <person name="Salzberg S.L."/>
            <person name="Sandelin A."/>
            <person name="Schneider C."/>
            <person name="Schoenbach C."/>
            <person name="Sekiguchi K."/>
            <person name="Semple C.A."/>
            <person name="Seno S."/>
            <person name="Sessa L."/>
            <person name="Sheng Y."/>
            <person name="Shibata Y."/>
            <person name="Shimada H."/>
            <person name="Shimada K."/>
            <person name="Silva D."/>
            <person name="Sinclair B."/>
            <person name="Sperling S."/>
            <person name="Stupka E."/>
            <person name="Sugiura K."/>
            <person name="Sultana R."/>
            <person name="Takenaka Y."/>
            <person name="Taki K."/>
            <person name="Tammoja K."/>
            <person name="Tan S.L."/>
            <person name="Tang S."/>
            <person name="Taylor M.S."/>
            <person name="Tegner J."/>
            <person name="Teichmann S.A."/>
            <person name="Ueda H.R."/>
            <person name="van Nimwegen E."/>
            <person name="Verardo R."/>
            <person name="Wei C.L."/>
            <person name="Yagi K."/>
            <person name="Yamanishi H."/>
            <person name="Zabarovsky E."/>
            <person name="Zhu S."/>
            <person name="Zimmer A."/>
            <person name="Hide W."/>
            <person name="Bult C."/>
            <person name="Grimmond S.M."/>
            <person name="Teasdale R.D."/>
            <person name="Liu E.T."/>
            <person name="Brusic V."/>
            <person name="Quackenbush J."/>
            <person name="Wahlestedt C."/>
            <person name="Mattick J.S."/>
            <person name="Hume D.A."/>
            <person name="Kai C."/>
            <person name="Sasaki D."/>
            <person name="Tomaru Y."/>
            <person name="Fukuda S."/>
            <person name="Kanamori-Katayama M."/>
            <person name="Suzuki M."/>
            <person name="Aoki J."/>
            <person name="Arakawa T."/>
            <person name="Iida J."/>
            <person name="Imamura K."/>
            <person name="Itoh M."/>
            <person name="Kato T."/>
            <person name="Kawaji H."/>
            <person name="Kawagashira N."/>
            <person name="Kawashima T."/>
            <person name="Kojima M."/>
            <person name="Kondo S."/>
            <person name="Konno H."/>
            <person name="Nakano K."/>
            <person name="Ninomiya N."/>
            <person name="Nishio T."/>
            <person name="Okada M."/>
            <person name="Plessy C."/>
            <person name="Shibata K."/>
            <person name="Shiraki T."/>
            <person name="Suzuki S."/>
            <person name="Tagami M."/>
            <person name="Waki K."/>
            <person name="Watahiki A."/>
            <person name="Okamura-Oho Y."/>
            <person name="Suzuki H."/>
            <person name="Kawai J."/>
            <person name="Hayashizaki Y."/>
        </authorList>
    </citation>
    <scope>NUCLEOTIDE SEQUENCE [LARGE SCALE MRNA] (ISOFORM 2)</scope>
    <source>
        <strain>C57BL/6J</strain>
        <tissue>Bone</tissue>
    </source>
</reference>
<reference key="3">
    <citation type="journal article" date="2009" name="PLoS Biol.">
        <title>Lineage-specific biology revealed by a finished genome assembly of the mouse.</title>
        <authorList>
            <person name="Church D.M."/>
            <person name="Goodstadt L."/>
            <person name="Hillier L.W."/>
            <person name="Zody M.C."/>
            <person name="Goldstein S."/>
            <person name="She X."/>
            <person name="Bult C.J."/>
            <person name="Agarwala R."/>
            <person name="Cherry J.L."/>
            <person name="DiCuccio M."/>
            <person name="Hlavina W."/>
            <person name="Kapustin Y."/>
            <person name="Meric P."/>
            <person name="Maglott D."/>
            <person name="Birtle Z."/>
            <person name="Marques A.C."/>
            <person name="Graves T."/>
            <person name="Zhou S."/>
            <person name="Teague B."/>
            <person name="Potamousis K."/>
            <person name="Churas C."/>
            <person name="Place M."/>
            <person name="Herschleb J."/>
            <person name="Runnheim R."/>
            <person name="Forrest D."/>
            <person name="Amos-Landgraf J."/>
            <person name="Schwartz D.C."/>
            <person name="Cheng Z."/>
            <person name="Lindblad-Toh K."/>
            <person name="Eichler E.E."/>
            <person name="Ponting C.P."/>
        </authorList>
    </citation>
    <scope>NUCLEOTIDE SEQUENCE [LARGE SCALE GENOMIC DNA]</scope>
    <source>
        <strain>C57BL/6J</strain>
    </source>
</reference>
<reference key="4">
    <citation type="journal article" date="2004" name="Genome Res.">
        <title>The status, quality, and expansion of the NIH full-length cDNA project: the Mammalian Gene Collection (MGC).</title>
        <authorList>
            <consortium name="The MGC Project Team"/>
        </authorList>
    </citation>
    <scope>NUCLEOTIDE SEQUENCE [LARGE SCALE MRNA] (ISOFORM 1)</scope>
</reference>
<reference key="5">
    <citation type="journal article" date="2003" name="DNA Res.">
        <title>Prediction of the coding sequences of mouse homologues of KIAA gene: II. The complete nucleotide sequences of 400 mouse KIAA-homologous cDNAs identified by screening of terminal sequences of cDNA clones randomly sampled from size-fractionated libraries.</title>
        <authorList>
            <person name="Okazaki N."/>
            <person name="Kikuno R."/>
            <person name="Ohara R."/>
            <person name="Inamoto S."/>
            <person name="Aizawa H."/>
            <person name="Yuasa S."/>
            <person name="Nakajima D."/>
            <person name="Nagase T."/>
            <person name="Ohara O."/>
            <person name="Koga H."/>
        </authorList>
    </citation>
    <scope>NUCLEOTIDE SEQUENCE [LARGE SCALE MRNA] OF 378-1345 (ISOFORM 1)</scope>
    <source>
        <tissue>Brain</tissue>
    </source>
</reference>
<reference key="6">
    <citation type="journal article" date="2010" name="Cell">
        <title>A tissue-specific atlas of mouse protein phosphorylation and expression.</title>
        <authorList>
            <person name="Huttlin E.L."/>
            <person name="Jedrychowski M.P."/>
            <person name="Elias J.E."/>
            <person name="Goswami T."/>
            <person name="Rad R."/>
            <person name="Beausoleil S.A."/>
            <person name="Villen J."/>
            <person name="Haas W."/>
            <person name="Sowa M.E."/>
            <person name="Gygi S.P."/>
        </authorList>
    </citation>
    <scope>IDENTIFICATION BY MASS SPECTROMETRY [LARGE SCALE ANALYSIS]</scope>
    <source>
        <tissue>Brain</tissue>
    </source>
</reference>
<reference key="7">
    <citation type="journal article" date="2014" name="Mol. Cell. Proteomics">
        <title>Immunoaffinity enrichment and mass spectrometry analysis of protein methylation.</title>
        <authorList>
            <person name="Guo A."/>
            <person name="Gu H."/>
            <person name="Zhou J."/>
            <person name="Mulhern D."/>
            <person name="Wang Y."/>
            <person name="Lee K.A."/>
            <person name="Yang V."/>
            <person name="Aguiar M."/>
            <person name="Kornhauser J."/>
            <person name="Jia X."/>
            <person name="Ren J."/>
            <person name="Beausoleil S.A."/>
            <person name="Silva J.C."/>
            <person name="Vemulapalli V."/>
            <person name="Bedford M.T."/>
            <person name="Comb M.J."/>
        </authorList>
    </citation>
    <scope>METHYLATION [LARGE SCALE ANALYSIS] AT ARG-1310</scope>
    <scope>IDENTIFICATION BY MASS SPECTROMETRY [LARGE SCALE ANALYSIS]</scope>
    <source>
        <tissue>Brain</tissue>
    </source>
</reference>
<feature type="chain" id="PRO_0000310697" description="Protein dispatched homolog 2">
    <location>
        <begin position="1"/>
        <end position="1345"/>
    </location>
</feature>
<feature type="transmembrane region" description="Helical" evidence="1">
    <location>
        <begin position="125"/>
        <end position="145"/>
    </location>
</feature>
<feature type="transmembrane region" description="Helical" evidence="1">
    <location>
        <begin position="440"/>
        <end position="460"/>
    </location>
</feature>
<feature type="transmembrane region" description="Helical" evidence="1">
    <location>
        <begin position="465"/>
        <end position="485"/>
    </location>
</feature>
<feature type="transmembrane region" description="Helical" evidence="1">
    <location>
        <begin position="497"/>
        <end position="517"/>
    </location>
</feature>
<feature type="transmembrane region" description="Helical" evidence="1">
    <location>
        <begin position="544"/>
        <end position="564"/>
    </location>
</feature>
<feature type="transmembrane region" description="Helical" evidence="1">
    <location>
        <begin position="572"/>
        <end position="592"/>
    </location>
</feature>
<feature type="transmembrane region" description="Helical" evidence="1">
    <location>
        <begin position="659"/>
        <end position="679"/>
    </location>
</feature>
<feature type="transmembrane region" description="Helical" evidence="1">
    <location>
        <begin position="919"/>
        <end position="939"/>
    </location>
</feature>
<feature type="transmembrane region" description="Helical" evidence="1">
    <location>
        <begin position="945"/>
        <end position="965"/>
    </location>
</feature>
<feature type="transmembrane region" description="Helical" evidence="1">
    <location>
        <begin position="974"/>
        <end position="994"/>
    </location>
</feature>
<feature type="transmembrane region" description="Helical" evidence="1">
    <location>
        <begin position="1019"/>
        <end position="1039"/>
    </location>
</feature>
<feature type="transmembrane region" description="Helical" evidence="1">
    <location>
        <begin position="1043"/>
        <end position="1063"/>
    </location>
</feature>
<feature type="domain" description="SSD" evidence="2">
    <location>
        <begin position="429"/>
        <end position="598"/>
    </location>
</feature>
<feature type="region of interest" description="Disordered" evidence="3">
    <location>
        <begin position="1"/>
        <end position="28"/>
    </location>
</feature>
<feature type="region of interest" description="Disordered" evidence="3">
    <location>
        <begin position="1251"/>
        <end position="1271"/>
    </location>
</feature>
<feature type="region of interest" description="Disordered" evidence="3">
    <location>
        <begin position="1295"/>
        <end position="1345"/>
    </location>
</feature>
<feature type="compositionally biased region" description="Polar residues" evidence="3">
    <location>
        <begin position="1297"/>
        <end position="1306"/>
    </location>
</feature>
<feature type="modified residue" description="Omega-N-methylarginine" evidence="6">
    <location>
        <position position="1310"/>
    </location>
</feature>
<feature type="glycosylation site" description="N-linked (GlcNAc...) asparagine" evidence="1">
    <location>
        <position position="304"/>
    </location>
</feature>
<feature type="glycosylation site" description="N-linked (GlcNAc...) asparagine" evidence="1">
    <location>
        <position position="420"/>
    </location>
</feature>
<feature type="glycosylation site" description="N-linked (GlcNAc...) asparagine" evidence="1">
    <location>
        <position position="776"/>
    </location>
</feature>
<feature type="splice variant" id="VSP_029324" description="In isoform 2." evidence="4">
    <original>IRSHISFGALCQRSAANECCPSWSLGNYLAVL</original>
    <variation>EGSVRVPVVSAMWEAEAGGLLEPRRPSTAWTT</variation>
    <location>
        <begin position="271"/>
        <end position="302"/>
    </location>
</feature>
<feature type="splice variant" id="VSP_029325" description="In isoform 2." evidence="4">
    <location>
        <begin position="303"/>
        <end position="1345"/>
    </location>
</feature>
<feature type="sequence conflict" description="In Ref. 5; BAC65829." evidence="5" ref="5">
    <original>C</original>
    <variation>S</variation>
    <location>
        <position position="1066"/>
    </location>
</feature>
<feature type="sequence conflict" description="In Ref. 4; AAI18527 and 5; BAC65829." evidence="5" ref="4 5">
    <original>S</original>
    <variation>P</variation>
    <location>
        <position position="1219"/>
    </location>
</feature>
<protein>
    <recommendedName>
        <fullName>Protein dispatched homolog 2</fullName>
    </recommendedName>
</protein>
<proteinExistence type="evidence at protein level"/>
<name>DISP2_MOUSE</name>
<evidence type="ECO:0000255" key="1"/>
<evidence type="ECO:0000255" key="2">
    <source>
        <dbReference type="PROSITE-ProRule" id="PRU00199"/>
    </source>
</evidence>
<evidence type="ECO:0000256" key="3">
    <source>
        <dbReference type="SAM" id="MobiDB-lite"/>
    </source>
</evidence>
<evidence type="ECO:0000303" key="4">
    <source>
    </source>
</evidence>
<evidence type="ECO:0000305" key="5"/>
<evidence type="ECO:0007744" key="6">
    <source>
    </source>
</evidence>
<dbReference type="EMBL" id="AY150699">
    <property type="protein sequence ID" value="AAN52162.1"/>
    <property type="molecule type" value="mRNA"/>
</dbReference>
<dbReference type="EMBL" id="AK036480">
    <property type="protein sequence ID" value="BAC29446.1"/>
    <property type="molecule type" value="mRNA"/>
</dbReference>
<dbReference type="EMBL" id="AL772255">
    <property type="status" value="NOT_ANNOTATED_CDS"/>
    <property type="molecule type" value="Genomic_DNA"/>
</dbReference>
<dbReference type="EMBL" id="BC118526">
    <property type="protein sequence ID" value="AAI18527.1"/>
    <property type="molecule type" value="mRNA"/>
</dbReference>
<dbReference type="EMBL" id="AK122547">
    <property type="protein sequence ID" value="BAC65829.1"/>
    <property type="molecule type" value="mRNA"/>
</dbReference>
<dbReference type="CCDS" id="CCDS16584.1">
    <molecule id="Q8CIP5-1"/>
</dbReference>
<dbReference type="RefSeq" id="NP_733481.1">
    <molecule id="Q8CIP5-1"/>
    <property type="nucleotide sequence ID" value="NM_170593.3"/>
</dbReference>
<dbReference type="RefSeq" id="XP_006499170.1">
    <molecule id="Q8CIP5-1"/>
    <property type="nucleotide sequence ID" value="XM_006499107.2"/>
</dbReference>
<dbReference type="SMR" id="Q8CIP5"/>
<dbReference type="FunCoup" id="Q8CIP5">
    <property type="interactions" value="249"/>
</dbReference>
<dbReference type="STRING" id="10090.ENSMUSP00000037136"/>
<dbReference type="GlyCosmos" id="Q8CIP5">
    <property type="glycosylation" value="3 sites, No reported glycans"/>
</dbReference>
<dbReference type="GlyGen" id="Q8CIP5">
    <property type="glycosylation" value="6 sites, 2 N-linked glycans (2 sites)"/>
</dbReference>
<dbReference type="iPTMnet" id="Q8CIP5"/>
<dbReference type="PhosphoSitePlus" id="Q8CIP5"/>
<dbReference type="SwissPalm" id="Q8CIP5"/>
<dbReference type="PaxDb" id="10090-ENSMUSP00000037136"/>
<dbReference type="PeptideAtlas" id="Q8CIP5"/>
<dbReference type="ProteomicsDB" id="279776">
    <molecule id="Q8CIP5-1"/>
</dbReference>
<dbReference type="ProteomicsDB" id="279777">
    <molecule id="Q8CIP5-2"/>
</dbReference>
<dbReference type="Antibodypedia" id="23061">
    <property type="antibodies" value="93 antibodies from 24 providers"/>
</dbReference>
<dbReference type="DNASU" id="214240"/>
<dbReference type="Ensembl" id="ENSMUST00000037547.9">
    <molecule id="Q8CIP5-1"/>
    <property type="protein sequence ID" value="ENSMUSP00000037136.3"/>
    <property type="gene ID" value="ENSMUSG00000040035.15"/>
</dbReference>
<dbReference type="Ensembl" id="ENSMUST00000110846.8">
    <molecule id="Q8CIP5-2"/>
    <property type="protein sequence ID" value="ENSMUSP00000106470.2"/>
    <property type="gene ID" value="ENSMUSG00000040035.15"/>
</dbReference>
<dbReference type="GeneID" id="214240"/>
<dbReference type="KEGG" id="mmu:214240"/>
<dbReference type="UCSC" id="uc008lsq.1">
    <molecule id="Q8CIP5-1"/>
    <property type="organism name" value="mouse"/>
</dbReference>
<dbReference type="AGR" id="MGI:2388733"/>
<dbReference type="CTD" id="85455"/>
<dbReference type="MGI" id="MGI:2388733">
    <property type="gene designation" value="Disp2"/>
</dbReference>
<dbReference type="VEuPathDB" id="HostDB:ENSMUSG00000040035"/>
<dbReference type="eggNOG" id="KOG3664">
    <property type="taxonomic scope" value="Eukaryota"/>
</dbReference>
<dbReference type="GeneTree" id="ENSGT00940000159551"/>
<dbReference type="HOGENOM" id="CLU_004076_1_1_1"/>
<dbReference type="InParanoid" id="Q8CIP5"/>
<dbReference type="OMA" id="MPVTIVW"/>
<dbReference type="OrthoDB" id="193905at2759"/>
<dbReference type="PhylomeDB" id="Q8CIP5"/>
<dbReference type="TreeFam" id="TF324144"/>
<dbReference type="Reactome" id="R-MMU-5362798">
    <property type="pathway name" value="Release of Hh-Np from the secreting cell"/>
</dbReference>
<dbReference type="BioGRID-ORCS" id="214240">
    <property type="hits" value="1 hit in 76 CRISPR screens"/>
</dbReference>
<dbReference type="ChiTaRS" id="Disp2">
    <property type="organism name" value="mouse"/>
</dbReference>
<dbReference type="PRO" id="PR:Q8CIP5"/>
<dbReference type="Proteomes" id="UP000000589">
    <property type="component" value="Chromosome 2"/>
</dbReference>
<dbReference type="RNAct" id="Q8CIP5">
    <property type="molecule type" value="protein"/>
</dbReference>
<dbReference type="Bgee" id="ENSMUSG00000040035">
    <property type="expression patterns" value="Expressed in dorsomedial nucleus of hypothalamus and 116 other cell types or tissues"/>
</dbReference>
<dbReference type="ExpressionAtlas" id="Q8CIP5">
    <property type="expression patterns" value="baseline and differential"/>
</dbReference>
<dbReference type="GO" id="GO:0005886">
    <property type="term" value="C:plasma membrane"/>
    <property type="evidence" value="ECO:0000304"/>
    <property type="project" value="Reactome"/>
</dbReference>
<dbReference type="FunFam" id="1.20.1640.10:FF:000011">
    <property type="entry name" value="Dispatched RND transporter family member 1"/>
    <property type="match status" value="1"/>
</dbReference>
<dbReference type="FunFam" id="1.20.1640.10:FF:000026">
    <property type="entry name" value="Dispatched RND transporter family member 2"/>
    <property type="match status" value="1"/>
</dbReference>
<dbReference type="Gene3D" id="1.20.1640.10">
    <property type="entry name" value="Multidrug efflux transporter AcrB transmembrane domain"/>
    <property type="match status" value="2"/>
</dbReference>
<dbReference type="InterPro" id="IPR052081">
    <property type="entry name" value="Dispatched_Hh_regulator"/>
</dbReference>
<dbReference type="InterPro" id="IPR053958">
    <property type="entry name" value="HMGCR/SNAP/NPC1-like_SSD"/>
</dbReference>
<dbReference type="InterPro" id="IPR000731">
    <property type="entry name" value="SSD"/>
</dbReference>
<dbReference type="PANTHER" id="PTHR45951:SF2">
    <property type="entry name" value="PROTEIN DISPATCHED HOMOLOG 2"/>
    <property type="match status" value="1"/>
</dbReference>
<dbReference type="PANTHER" id="PTHR45951">
    <property type="entry name" value="PROTEIN DISPATCHED-RELATED"/>
    <property type="match status" value="1"/>
</dbReference>
<dbReference type="Pfam" id="PF12349">
    <property type="entry name" value="Sterol-sensing"/>
    <property type="match status" value="1"/>
</dbReference>
<dbReference type="SUPFAM" id="SSF82866">
    <property type="entry name" value="Multidrug efflux transporter AcrB transmembrane domain"/>
    <property type="match status" value="2"/>
</dbReference>
<dbReference type="PROSITE" id="PS50156">
    <property type="entry name" value="SSD"/>
    <property type="match status" value="1"/>
</dbReference>
<accession>Q8CIP5</accession>
<accession>Q148A2</accession>
<accession>Q80T98</accession>
<accession>Q8CBA3</accession>